<proteinExistence type="inferred from homology"/>
<name>GCSP_PECAS</name>
<organism>
    <name type="scientific">Pectobacterium atrosepticum (strain SCRI 1043 / ATCC BAA-672)</name>
    <name type="common">Erwinia carotovora subsp. atroseptica</name>
    <dbReference type="NCBI Taxonomy" id="218491"/>
    <lineage>
        <taxon>Bacteria</taxon>
        <taxon>Pseudomonadati</taxon>
        <taxon>Pseudomonadota</taxon>
        <taxon>Gammaproteobacteria</taxon>
        <taxon>Enterobacterales</taxon>
        <taxon>Pectobacteriaceae</taxon>
        <taxon>Pectobacterium</taxon>
    </lineage>
</organism>
<evidence type="ECO:0000255" key="1">
    <source>
        <dbReference type="HAMAP-Rule" id="MF_00711"/>
    </source>
</evidence>
<feature type="chain" id="PRO_0000227104" description="Glycine dehydrogenase (decarboxylating)">
    <location>
        <begin position="1"/>
        <end position="957"/>
    </location>
</feature>
<feature type="modified residue" description="N6-(pyridoxal phosphate)lysine" evidence="1">
    <location>
        <position position="708"/>
    </location>
</feature>
<accession>Q6D974</accession>
<reference key="1">
    <citation type="journal article" date="2004" name="Proc. Natl. Acad. Sci. U.S.A.">
        <title>Genome sequence of the enterobacterial phytopathogen Erwinia carotovora subsp. atroseptica and characterization of virulence factors.</title>
        <authorList>
            <person name="Bell K.S."/>
            <person name="Sebaihia M."/>
            <person name="Pritchard L."/>
            <person name="Holden M.T.G."/>
            <person name="Hyman L.J."/>
            <person name="Holeva M.C."/>
            <person name="Thomson N.R."/>
            <person name="Bentley S.D."/>
            <person name="Churcher L.J.C."/>
            <person name="Mungall K."/>
            <person name="Atkin R."/>
            <person name="Bason N."/>
            <person name="Brooks K."/>
            <person name="Chillingworth T."/>
            <person name="Clark K."/>
            <person name="Doggett J."/>
            <person name="Fraser A."/>
            <person name="Hance Z."/>
            <person name="Hauser H."/>
            <person name="Jagels K."/>
            <person name="Moule S."/>
            <person name="Norbertczak H."/>
            <person name="Ormond D."/>
            <person name="Price C."/>
            <person name="Quail M.A."/>
            <person name="Sanders M."/>
            <person name="Walker D."/>
            <person name="Whitehead S."/>
            <person name="Salmond G.P.C."/>
            <person name="Birch P.R.J."/>
            <person name="Parkhill J."/>
            <person name="Toth I.K."/>
        </authorList>
    </citation>
    <scope>NUCLEOTIDE SEQUENCE [LARGE SCALE GENOMIC DNA]</scope>
    <source>
        <strain>SCRI 1043 / ATCC BAA-672</strain>
    </source>
</reference>
<dbReference type="EC" id="1.4.4.2" evidence="1"/>
<dbReference type="EMBL" id="BX950851">
    <property type="protein sequence ID" value="CAG73659.1"/>
    <property type="molecule type" value="Genomic_DNA"/>
</dbReference>
<dbReference type="RefSeq" id="WP_011092352.1">
    <property type="nucleotide sequence ID" value="NC_004547.2"/>
</dbReference>
<dbReference type="SMR" id="Q6D974"/>
<dbReference type="STRING" id="218491.ECA0745"/>
<dbReference type="KEGG" id="eca:ECA0745"/>
<dbReference type="PATRIC" id="fig|218491.5.peg.743"/>
<dbReference type="eggNOG" id="COG0403">
    <property type="taxonomic scope" value="Bacteria"/>
</dbReference>
<dbReference type="eggNOG" id="COG1003">
    <property type="taxonomic scope" value="Bacteria"/>
</dbReference>
<dbReference type="HOGENOM" id="CLU_004620_3_2_6"/>
<dbReference type="OrthoDB" id="9801272at2"/>
<dbReference type="Proteomes" id="UP000007966">
    <property type="component" value="Chromosome"/>
</dbReference>
<dbReference type="GO" id="GO:0005829">
    <property type="term" value="C:cytosol"/>
    <property type="evidence" value="ECO:0007669"/>
    <property type="project" value="TreeGrafter"/>
</dbReference>
<dbReference type="GO" id="GO:0005960">
    <property type="term" value="C:glycine cleavage complex"/>
    <property type="evidence" value="ECO:0007669"/>
    <property type="project" value="TreeGrafter"/>
</dbReference>
<dbReference type="GO" id="GO:0016594">
    <property type="term" value="F:glycine binding"/>
    <property type="evidence" value="ECO:0007669"/>
    <property type="project" value="TreeGrafter"/>
</dbReference>
<dbReference type="GO" id="GO:0004375">
    <property type="term" value="F:glycine dehydrogenase (decarboxylating) activity"/>
    <property type="evidence" value="ECO:0007669"/>
    <property type="project" value="UniProtKB-EC"/>
</dbReference>
<dbReference type="GO" id="GO:0030170">
    <property type="term" value="F:pyridoxal phosphate binding"/>
    <property type="evidence" value="ECO:0007669"/>
    <property type="project" value="TreeGrafter"/>
</dbReference>
<dbReference type="GO" id="GO:0019464">
    <property type="term" value="P:glycine decarboxylation via glycine cleavage system"/>
    <property type="evidence" value="ECO:0007669"/>
    <property type="project" value="UniProtKB-UniRule"/>
</dbReference>
<dbReference type="CDD" id="cd00613">
    <property type="entry name" value="GDC-P"/>
    <property type="match status" value="2"/>
</dbReference>
<dbReference type="FunFam" id="3.40.640.10:FF:000005">
    <property type="entry name" value="Glycine dehydrogenase (decarboxylating), mitochondrial"/>
    <property type="match status" value="1"/>
</dbReference>
<dbReference type="FunFam" id="3.90.1150.10:FF:000007">
    <property type="entry name" value="Glycine dehydrogenase (decarboxylating), mitochondrial"/>
    <property type="match status" value="1"/>
</dbReference>
<dbReference type="FunFam" id="3.40.640.10:FF:000007">
    <property type="entry name" value="glycine dehydrogenase (Decarboxylating), mitochondrial"/>
    <property type="match status" value="1"/>
</dbReference>
<dbReference type="Gene3D" id="3.90.1150.10">
    <property type="entry name" value="Aspartate Aminotransferase, domain 1"/>
    <property type="match status" value="2"/>
</dbReference>
<dbReference type="Gene3D" id="3.40.640.10">
    <property type="entry name" value="Type I PLP-dependent aspartate aminotransferase-like (Major domain)"/>
    <property type="match status" value="2"/>
</dbReference>
<dbReference type="HAMAP" id="MF_00711">
    <property type="entry name" value="GcvP"/>
    <property type="match status" value="1"/>
</dbReference>
<dbReference type="InterPro" id="IPR003437">
    <property type="entry name" value="GcvP"/>
</dbReference>
<dbReference type="InterPro" id="IPR049316">
    <property type="entry name" value="GDC-P_C"/>
</dbReference>
<dbReference type="InterPro" id="IPR049315">
    <property type="entry name" value="GDC-P_N"/>
</dbReference>
<dbReference type="InterPro" id="IPR020581">
    <property type="entry name" value="GDC_P"/>
</dbReference>
<dbReference type="InterPro" id="IPR015424">
    <property type="entry name" value="PyrdxlP-dep_Trfase"/>
</dbReference>
<dbReference type="InterPro" id="IPR015421">
    <property type="entry name" value="PyrdxlP-dep_Trfase_major"/>
</dbReference>
<dbReference type="InterPro" id="IPR015422">
    <property type="entry name" value="PyrdxlP-dep_Trfase_small"/>
</dbReference>
<dbReference type="NCBIfam" id="TIGR00461">
    <property type="entry name" value="gcvP"/>
    <property type="match status" value="1"/>
</dbReference>
<dbReference type="NCBIfam" id="NF003346">
    <property type="entry name" value="PRK04366.1"/>
    <property type="match status" value="1"/>
</dbReference>
<dbReference type="PANTHER" id="PTHR11773:SF13">
    <property type="entry name" value="GLYCINE DEHYDROGENASE (DECARBOXYLATING)"/>
    <property type="match status" value="1"/>
</dbReference>
<dbReference type="PANTHER" id="PTHR11773">
    <property type="entry name" value="GLYCINE DEHYDROGENASE, DECARBOXYLATING"/>
    <property type="match status" value="1"/>
</dbReference>
<dbReference type="Pfam" id="PF21478">
    <property type="entry name" value="GcvP2_C"/>
    <property type="match status" value="1"/>
</dbReference>
<dbReference type="Pfam" id="PF02347">
    <property type="entry name" value="GDC-P"/>
    <property type="match status" value="2"/>
</dbReference>
<dbReference type="SUPFAM" id="SSF53383">
    <property type="entry name" value="PLP-dependent transferases"/>
    <property type="match status" value="2"/>
</dbReference>
<comment type="function">
    <text evidence="1">The glycine cleavage system catalyzes the degradation of glycine. The P protein binds the alpha-amino group of glycine through its pyridoxal phosphate cofactor; CO(2) is released and the remaining methylamine moiety is then transferred to the lipoamide cofactor of the H protein.</text>
</comment>
<comment type="catalytic activity">
    <reaction evidence="1">
        <text>N(6)-[(R)-lipoyl]-L-lysyl-[glycine-cleavage complex H protein] + glycine + H(+) = N(6)-[(R)-S(8)-aminomethyldihydrolipoyl]-L-lysyl-[glycine-cleavage complex H protein] + CO2</text>
        <dbReference type="Rhea" id="RHEA:24304"/>
        <dbReference type="Rhea" id="RHEA-COMP:10494"/>
        <dbReference type="Rhea" id="RHEA-COMP:10495"/>
        <dbReference type="ChEBI" id="CHEBI:15378"/>
        <dbReference type="ChEBI" id="CHEBI:16526"/>
        <dbReference type="ChEBI" id="CHEBI:57305"/>
        <dbReference type="ChEBI" id="CHEBI:83099"/>
        <dbReference type="ChEBI" id="CHEBI:83143"/>
        <dbReference type="EC" id="1.4.4.2"/>
    </reaction>
</comment>
<comment type="cofactor">
    <cofactor evidence="1">
        <name>pyridoxal 5'-phosphate</name>
        <dbReference type="ChEBI" id="CHEBI:597326"/>
    </cofactor>
</comment>
<comment type="subunit">
    <text evidence="1">The glycine cleavage system is composed of four proteins: P, T, L and H.</text>
</comment>
<comment type="similarity">
    <text evidence="1">Belongs to the GcvP family.</text>
</comment>
<protein>
    <recommendedName>
        <fullName evidence="1">Glycine dehydrogenase (decarboxylating)</fullName>
        <ecNumber evidence="1">1.4.4.2</ecNumber>
    </recommendedName>
    <alternativeName>
        <fullName evidence="1">Glycine cleavage system P-protein</fullName>
    </alternativeName>
    <alternativeName>
        <fullName evidence="1">Glycine decarboxylase</fullName>
    </alternativeName>
    <alternativeName>
        <fullName evidence="1">Glycine dehydrogenase (aminomethyl-transferring)</fullName>
    </alternativeName>
</protein>
<keyword id="KW-0560">Oxidoreductase</keyword>
<keyword id="KW-0663">Pyridoxal phosphate</keyword>
<keyword id="KW-1185">Reference proteome</keyword>
<sequence length="957" mass="104119">MTQTLSQLEHDGAFIERHIGPSVSQQQHMLSVVGATSLDALIRQIVPADIQLPSPPAVGEAVTEHEALAELKAIAGRNQRYKSYIGMGYSAVLMPPVILRNVLENPGWYTAYTPYQPEVSQGRLEALLNFQQVTQDLTGLDLASASLLDEATAAAEAMAMAKRISKLKQAERFFVADDVHPQTLDVVRTRAETFGFEIVVGKAEEALKDDAVFGVLLQQAGTTGELHDYSDLMAALKARKVVSCVASDIMALVLLTAPGKQGADIVFGSAQRFGVPMGYGGPHAAFFACRDEHKRAMPGRIIGVSRDAAGNTAFRMAMQTREQHIRREKANSNICTSQVLLANIAGMYAVFHGPEGLKRIAGRIHRLTDILAAGLTQGGLLLRHRSWFDTLTIEVADKDVVLSRALSFGINLRSDLASAVGITLDEATTREDVLALFAVLLGDDHGLDIEALDASIAQEVATIPAGLLRHDAILSHPVFNRYHSETEMMRYLHRLARKDLALNQAMIPLGSCTMKLNAAAEMLPITWPEFAELHPFCPPEQALGYRQMIEQLSGWLVQLTGYDAVCMQPNSGAQGEYAGLLAIRRYHESRNEAGRHLCLIPSSAHGTNPASAQMAGMEVVVVACDKQGNIDLHDLREKAQAAGEQLSCIMVTYPSTHGVYEETIREVCQIVHQYGGQVYLDGANMNAQVGITTPGYIGADVSHLNLHKTFCIPHGGGGPGMGPIGVKAHLAPFVPGHQVVKIDGVLTEQGAVSAAPFGSASILPISWMYIRMMGAEGLKQASQMAILNANYIATRLQQAYPVLYTGRDGRVAHECILDIRPLKESTGISEMDIAKRLIDYGFHAPTMSFPVAGTLMVEPTESESQVEIDRFIDAMLAIRSEINRVAQGEWPLDDNPLVNAPHTQAELVADWAHPYSRELAVFPAGSEHKYWPSVKRLDDVYGDRNLFCSCVPMSDYA</sequence>
<gene>
    <name evidence="1" type="primary">gcvP</name>
    <name type="ordered locus">ECA0745</name>
</gene>